<sequence>MVFRIASSPYTHNQRQTSRIMLLVLLAAVPGIAAQLWFFGWGTLVQILLASVSALLAEALVLKLRKQSVAATLKDNSALLTGLLLAVSIPPLAPWWMVVLGTVFAVIIAKQLYGGLGQNPFNPAMIGYVVLLISFPVQMTSWLPPHEIAVNIPGFIDAIQVIFSGHTTSGGDMNTLRLGIDGISQATPLDTFKTSVRAGHSVEEIMQYPIYSGILAGAGWQWVNLAWLAGGVWLLWQKAIRWHVPLSFLVTLALCATLGWLFSPDTLAAPQIHLLSGATMLGAFFILTDPVTASTTNRGRLIFGALAGLLVWMIRSFGGYPDGVAFAVLLANITVPLIDYYTRPRVYGHRKG</sequence>
<keyword id="KW-0997">Cell inner membrane</keyword>
<keyword id="KW-1003">Cell membrane</keyword>
<keyword id="KW-0249">Electron transport</keyword>
<keyword id="KW-0285">Flavoprotein</keyword>
<keyword id="KW-0288">FMN</keyword>
<keyword id="KW-0472">Membrane</keyword>
<keyword id="KW-0597">Phosphoprotein</keyword>
<keyword id="KW-1185">Reference proteome</keyword>
<keyword id="KW-1278">Translocase</keyword>
<keyword id="KW-0812">Transmembrane</keyword>
<keyword id="KW-1133">Transmembrane helix</keyword>
<keyword id="KW-0813">Transport</keyword>
<dbReference type="EC" id="7.-.-.-" evidence="1"/>
<dbReference type="EMBL" id="CP000468">
    <property type="protein sequence ID" value="ABJ01015.1"/>
    <property type="molecule type" value="Genomic_DNA"/>
</dbReference>
<dbReference type="RefSeq" id="WP_000231939.1">
    <property type="nucleotide sequence ID" value="NZ_CADILS010000002.1"/>
</dbReference>
<dbReference type="SMR" id="A1ABH5"/>
<dbReference type="KEGG" id="ecv:APECO1_713"/>
<dbReference type="HOGENOM" id="CLU_042020_0_0_6"/>
<dbReference type="Proteomes" id="UP000008216">
    <property type="component" value="Chromosome"/>
</dbReference>
<dbReference type="GO" id="GO:0005886">
    <property type="term" value="C:plasma membrane"/>
    <property type="evidence" value="ECO:0007669"/>
    <property type="project" value="UniProtKB-SubCell"/>
</dbReference>
<dbReference type="GO" id="GO:0022900">
    <property type="term" value="P:electron transport chain"/>
    <property type="evidence" value="ECO:0007669"/>
    <property type="project" value="UniProtKB-UniRule"/>
</dbReference>
<dbReference type="GO" id="GO:0055085">
    <property type="term" value="P:transmembrane transport"/>
    <property type="evidence" value="ECO:0007669"/>
    <property type="project" value="InterPro"/>
</dbReference>
<dbReference type="HAMAP" id="MF_00462">
    <property type="entry name" value="RsxD_RnfD"/>
    <property type="match status" value="1"/>
</dbReference>
<dbReference type="InterPro" id="IPR004338">
    <property type="entry name" value="NqrB/RnfD"/>
</dbReference>
<dbReference type="InterPro" id="IPR011303">
    <property type="entry name" value="RnfD_bac"/>
</dbReference>
<dbReference type="NCBIfam" id="NF002011">
    <property type="entry name" value="PRK00816.1"/>
    <property type="match status" value="1"/>
</dbReference>
<dbReference type="NCBIfam" id="TIGR01946">
    <property type="entry name" value="rnfD"/>
    <property type="match status" value="1"/>
</dbReference>
<dbReference type="PANTHER" id="PTHR30578">
    <property type="entry name" value="ELECTRON TRANSPORT COMPLEX PROTEIN RNFD"/>
    <property type="match status" value="1"/>
</dbReference>
<dbReference type="PANTHER" id="PTHR30578:SF0">
    <property type="entry name" value="ION-TRANSLOCATING OXIDOREDUCTASE COMPLEX SUBUNIT D"/>
    <property type="match status" value="1"/>
</dbReference>
<dbReference type="Pfam" id="PF03116">
    <property type="entry name" value="NQR2_RnfD_RnfE"/>
    <property type="match status" value="1"/>
</dbReference>
<proteinExistence type="inferred from homology"/>
<reference key="1">
    <citation type="journal article" date="2007" name="J. Bacteriol.">
        <title>The genome sequence of avian pathogenic Escherichia coli strain O1:K1:H7 shares strong similarities with human extraintestinal pathogenic E. coli genomes.</title>
        <authorList>
            <person name="Johnson T.J."/>
            <person name="Kariyawasam S."/>
            <person name="Wannemuehler Y."/>
            <person name="Mangiamele P."/>
            <person name="Johnson S.J."/>
            <person name="Doetkott C."/>
            <person name="Skyberg J.A."/>
            <person name="Lynne A.M."/>
            <person name="Johnson J.R."/>
            <person name="Nolan L.K."/>
        </authorList>
    </citation>
    <scope>NUCLEOTIDE SEQUENCE [LARGE SCALE GENOMIC DNA]</scope>
</reference>
<feature type="chain" id="PRO_0000298229" description="Ion-translocating oxidoreductase complex subunit D">
    <location>
        <begin position="1"/>
        <end position="352"/>
    </location>
</feature>
<feature type="transmembrane region" description="Helical" evidence="1">
    <location>
        <begin position="20"/>
        <end position="40"/>
    </location>
</feature>
<feature type="transmembrane region" description="Helical" evidence="1">
    <location>
        <begin position="42"/>
        <end position="62"/>
    </location>
</feature>
<feature type="transmembrane region" description="Helical" evidence="1">
    <location>
        <begin position="89"/>
        <end position="109"/>
    </location>
</feature>
<feature type="transmembrane region" description="Helical" evidence="1">
    <location>
        <begin position="123"/>
        <end position="143"/>
    </location>
</feature>
<feature type="transmembrane region" description="Helical" evidence="1">
    <location>
        <begin position="214"/>
        <end position="234"/>
    </location>
</feature>
<feature type="transmembrane region" description="Helical" evidence="1">
    <location>
        <begin position="242"/>
        <end position="262"/>
    </location>
</feature>
<feature type="transmembrane region" description="Helical" evidence="1">
    <location>
        <begin position="267"/>
        <end position="287"/>
    </location>
</feature>
<feature type="transmembrane region" description="Helical" evidence="1">
    <location>
        <begin position="301"/>
        <end position="321"/>
    </location>
</feature>
<feature type="transmembrane region" description="Helical" evidence="1">
    <location>
        <begin position="322"/>
        <end position="342"/>
    </location>
</feature>
<feature type="modified residue" description="FMN phosphoryl threonine" evidence="1">
    <location>
        <position position="187"/>
    </location>
</feature>
<gene>
    <name evidence="1" type="primary">rsxD</name>
    <name type="synonym">rnfD</name>
    <name type="ordered locus">Ecok1_15210</name>
    <name type="ORF">APECO1_713</name>
</gene>
<comment type="function">
    <text evidence="1">Part of a membrane-bound complex that couples electron transfer with translocation of ions across the membrane. Required to maintain the reduced state of SoxR.</text>
</comment>
<comment type="cofactor">
    <cofactor evidence="1">
        <name>FMN</name>
        <dbReference type="ChEBI" id="CHEBI:58210"/>
    </cofactor>
</comment>
<comment type="subunit">
    <text evidence="1">The complex is composed of six subunits: RsxA, RsxB, RsxC, RsxD, RsxE and RsxG.</text>
</comment>
<comment type="subcellular location">
    <subcellularLocation>
        <location evidence="1">Cell inner membrane</location>
        <topology evidence="1">Multi-pass membrane protein</topology>
    </subcellularLocation>
</comment>
<comment type="similarity">
    <text evidence="1">Belongs to the NqrB/RnfD family.</text>
</comment>
<protein>
    <recommendedName>
        <fullName evidence="1">Ion-translocating oxidoreductase complex subunit D</fullName>
        <ecNumber evidence="1">7.-.-.-</ecNumber>
    </recommendedName>
    <alternativeName>
        <fullName evidence="1">Rsx electron transport complex subunit D</fullName>
    </alternativeName>
</protein>
<evidence type="ECO:0000255" key="1">
    <source>
        <dbReference type="HAMAP-Rule" id="MF_00462"/>
    </source>
</evidence>
<accession>A1ABH5</accession>
<organism>
    <name type="scientific">Escherichia coli O1:K1 / APEC</name>
    <dbReference type="NCBI Taxonomy" id="405955"/>
    <lineage>
        <taxon>Bacteria</taxon>
        <taxon>Pseudomonadati</taxon>
        <taxon>Pseudomonadota</taxon>
        <taxon>Gammaproteobacteria</taxon>
        <taxon>Enterobacterales</taxon>
        <taxon>Enterobacteriaceae</taxon>
        <taxon>Escherichia</taxon>
    </lineage>
</organism>
<name>RSXD_ECOK1</name>